<evidence type="ECO:0000250" key="1">
    <source>
        <dbReference type="UniProtKB" id="Q1PSW8"/>
    </source>
</evidence>
<evidence type="ECO:0000250" key="2">
    <source>
        <dbReference type="UniProtKB" id="Q2Q1W2"/>
    </source>
</evidence>
<evidence type="ECO:0000255" key="3"/>
<evidence type="ECO:0000255" key="4">
    <source>
        <dbReference type="PROSITE-ProRule" id="PRU00024"/>
    </source>
</evidence>
<evidence type="ECO:0000255" key="5">
    <source>
        <dbReference type="PROSITE-ProRule" id="PRU00175"/>
    </source>
</evidence>
<evidence type="ECO:0000256" key="6">
    <source>
        <dbReference type="SAM" id="MobiDB-lite"/>
    </source>
</evidence>
<evidence type="ECO:0000269" key="7">
    <source>
    </source>
</evidence>
<evidence type="ECO:0000269" key="8">
    <source>
    </source>
</evidence>
<evidence type="ECO:0000305" key="9"/>
<sequence>MASFPEADFQVCPLCKEMCGSPAPLSSNSSTSSSSSQTSGSSGGGGSSCGGAARRLHVLPCLHAFCRQCLEAQRHPAAGDALKLRCPICDQKVVISEPSGMDALPSSNFLLSNLLDVVVVAAAADEQKNGRAAGSGPAAGSGAGGGGANNRHHGRPPPHRAAAAASSPAAGSAAPSASSSSSSGGGGPAALLLRRPHSRQGEPRCSSCDEGNAASSRCLDCQEHLCDNCVRAHQRVRLTKDHFIERFAAGPAAASAGPAAPLALSPPYPASPYNILSVFPERASYCQHHDDEVLHFYCDTCSVPICRECTMGRHVGHSFIYLQDALQDSRTLTIQLLADAQQGRQAIQLSIEQAQAVAEQVEMKAKVVQSEVKAVTTRHKKALEERECELLWKVEKIRQVKAKSLYLQVEKLRQNLNKLDNTISAVQQVLEEGRTIDILLARDRMLAQVQELKNVRGLLQPQEDDRIMFTPPDQALYMAIKSMGFVSSGAFAPLTKATGEGLKRALQGKVASFTVIGYDHDGEPRLSGGDMISAVVMGPDGNLFGADVSDQQNGTYLVSYRPQLEGEHLVSVMMCNQHIENSPFKVVVKSGRSYIGIGLPGLSFGSEGDSDGKLCRPWGVSVDKEGYIIVADRSNNRIQVFKPCGTFHHKFGTLGSRPGQFDRPAGVACDVSRRIVVADKDNHRIQIFTFEGQFILKFGEKGTKNGQFNYPWDVAVNAEGKILVSDTRNHRVQLFGPDGVFLNKYGFEGALWKHFDSPRGVTFNHEGHLVVTDFNNHRLLVIHADCQSARFLGSEGSGNGQFLRPQGVAVDQEGRIIVADSRNHRVQIFESNGSFLCKFGAQGSGFGQMDRPSGIAVTPDGMIVVVDFGNNRILVF</sequence>
<reference key="1">
    <citation type="journal article" date="2006" name="Dev. Dyn.">
        <title>Cloning and regulation of the vertebrate homologue of lin-41 that functions as a heterochronic gene in Caenorhabditis elegans.</title>
        <authorList>
            <person name="Kanamoto T."/>
            <person name="Terada K."/>
            <person name="Yoshikawa H."/>
            <person name="Furukawa T."/>
        </authorList>
    </citation>
    <scope>NUCLEOTIDE SEQUENCE [MRNA]</scope>
    <scope>DEVELOPMENTAL STAGE</scope>
    <source>
        <tissue>Embryo</tissue>
    </source>
</reference>
<reference key="2">
    <citation type="journal article" date="2005" name="Dev. Dyn.">
        <title>Analysis of the regulation of lin-41 during chick and mouse limb development.</title>
        <authorList>
            <person name="Lancman J.J."/>
            <person name="Caruccio N.C."/>
            <person name="Harfe B.D."/>
            <person name="Pasquinelli A.E."/>
            <person name="Schageman J.J."/>
            <person name="Pertsemlidis A."/>
            <person name="Fallon J.F."/>
        </authorList>
    </citation>
    <scope>NUCLEOTIDE SEQUENCE [MRNA] OF 156-876</scope>
    <scope>DEVELOPMENTAL STAGE</scope>
</reference>
<reference key="3">
    <citation type="submission" date="2005-09" db="EMBL/GenBank/DDBJ databases">
        <title>The role of Lin41 in limb development.</title>
        <authorList>
            <person name="Howell G.R."/>
            <person name="Beatie K."/>
            <person name="Towers M."/>
            <person name="Wilson S.A."/>
            <person name="Tickle C.A."/>
        </authorList>
    </citation>
    <scope>NUCLEOTIDE SEQUENCE [MRNA] OF 277-876</scope>
    <source>
        <tissue>Embryo</tissue>
    </source>
</reference>
<reference key="4">
    <citation type="journal article" date="2005" name="Dev. Dyn.">
        <title>Reciprocal expression of lin-41 and the microRNAs let-7 and mir-125 during mouse embryogenesis.</title>
        <authorList>
            <person name="Maller Schulman B.R."/>
            <person name="Esquela-Kerscher A."/>
            <person name="Slack F.J."/>
        </authorList>
    </citation>
    <scope>IDENTIFICATION</scope>
</reference>
<comment type="function">
    <text evidence="1">E3 ubiquitin-protein ligase that cooperates with the microRNAs (miRNAs) machinery and promotes embryonic stem cells proliferation and maintenance. Binds to miRNAs and participates in post-transcriptional repression of transcripts. Required to maintain proliferation and prevent premature differentiation of neural progenitor cells during early neural development.</text>
</comment>
<comment type="catalytic activity">
    <reaction>
        <text>S-ubiquitinyl-[E2 ubiquitin-conjugating enzyme]-L-cysteine + [acceptor protein]-L-lysine = [E2 ubiquitin-conjugating enzyme]-L-cysteine + N(6)-ubiquitinyl-[acceptor protein]-L-lysine.</text>
        <dbReference type="EC" id="2.3.2.27"/>
    </reaction>
</comment>
<comment type="pathway">
    <text>Protein modification; protein ubiquitination.</text>
</comment>
<comment type="subcellular location">
    <subcellularLocation>
        <location evidence="2">Cytoplasm</location>
        <location evidence="2">P-body</location>
    </subcellularLocation>
</comment>
<comment type="developmental stage">
    <text evidence="7 8">Expression is strong at early stages and decreases as development proceeds. At stage 9, expressed in the segmental plate mesoderm. At stage 15, expressed in branchial axs. At stage 19-27, expressed in branchial axs, limb buds and tail buds. At stage 27-29, expressed in the tips of digits.</text>
</comment>
<comment type="domain">
    <text evidence="2">The NHL domain, containing the 6 NHL repeats, is necessary and sufficient to target RNA but not to repress mRNA. The minimal region needed to execute repression consists of the coiled coil domain and the Filamin repeat. The RING-type domain is dispensable for mRNA repression.</text>
</comment>
<comment type="similarity">
    <text evidence="9">Belongs to the TRIM/RBCC family.</text>
</comment>
<comment type="sequence caution" evidence="9">
    <conflict type="erroneous initiation">
        <sequence resource="EMBL-CDS" id="AAZ57335"/>
    </conflict>
    <text>Extended N-terminus.</text>
</comment>
<comment type="sequence caution" evidence="9">
    <conflict type="erroneous initiation">
        <sequence resource="EMBL-CDS" id="CAJ32595"/>
    </conflict>
    <text>Truncated N-terminus.</text>
</comment>
<feature type="chain" id="PRO_0000279513" description="E3 ubiquitin-protein ligase TRIM71">
    <location>
        <begin position="1"/>
        <end position="876"/>
    </location>
</feature>
<feature type="repeat" description="Filamin">
    <location>
        <begin position="487"/>
        <end position="588"/>
    </location>
</feature>
<feature type="repeat" description="NHL 1">
    <location>
        <begin position="601"/>
        <end position="644"/>
    </location>
</feature>
<feature type="repeat" description="NHL 2">
    <location>
        <begin position="648"/>
        <end position="691"/>
    </location>
</feature>
<feature type="repeat" description="NHL 3">
    <location>
        <begin position="695"/>
        <end position="738"/>
    </location>
</feature>
<feature type="repeat" description="NHL 4">
    <location>
        <begin position="742"/>
        <end position="785"/>
    </location>
</feature>
<feature type="repeat" description="NHL 5">
    <location>
        <begin position="789"/>
        <end position="832"/>
    </location>
</feature>
<feature type="repeat" description="NHL 6">
    <location>
        <begin position="836"/>
        <end position="876"/>
    </location>
</feature>
<feature type="zinc finger region" description="RING-type" evidence="5">
    <location>
        <begin position="12"/>
        <end position="90"/>
    </location>
</feature>
<feature type="zinc finger region" description="B box-type 1; atypical" evidence="4">
    <location>
        <begin position="200"/>
        <end position="247"/>
    </location>
</feature>
<feature type="zinc finger region" description="B box-type 2" evidence="4">
    <location>
        <begin position="281"/>
        <end position="322"/>
    </location>
</feature>
<feature type="region of interest" description="Disordered" evidence="6">
    <location>
        <begin position="26"/>
        <end position="46"/>
    </location>
</feature>
<feature type="region of interest" description="Disordered" evidence="6">
    <location>
        <begin position="128"/>
        <end position="192"/>
    </location>
</feature>
<feature type="coiled-coil region" evidence="3">
    <location>
        <begin position="344"/>
        <end position="373"/>
    </location>
</feature>
<feature type="coiled-coil region" evidence="3">
    <location>
        <begin position="399"/>
        <end position="434"/>
    </location>
</feature>
<feature type="compositionally biased region" description="Low complexity" evidence="6">
    <location>
        <begin position="26"/>
        <end position="40"/>
    </location>
</feature>
<feature type="compositionally biased region" description="Gly residues" evidence="6">
    <location>
        <begin position="137"/>
        <end position="148"/>
    </location>
</feature>
<feature type="compositionally biased region" description="Low complexity" evidence="6">
    <location>
        <begin position="160"/>
        <end position="182"/>
    </location>
</feature>
<feature type="binding site" evidence="4">
    <location>
        <position position="205"/>
    </location>
    <ligand>
        <name>Zn(2+)</name>
        <dbReference type="ChEBI" id="CHEBI:29105"/>
        <label>1</label>
    </ligand>
</feature>
<feature type="binding site" evidence="4">
    <location>
        <position position="208"/>
    </location>
    <ligand>
        <name>Zn(2+)</name>
        <dbReference type="ChEBI" id="CHEBI:29105"/>
        <label>1</label>
    </ligand>
</feature>
<feature type="binding site" evidence="4">
    <location>
        <position position="229"/>
    </location>
    <ligand>
        <name>Zn(2+)</name>
        <dbReference type="ChEBI" id="CHEBI:29105"/>
        <label>1</label>
    </ligand>
</feature>
<feature type="binding site" evidence="4">
    <location>
        <position position="233"/>
    </location>
    <ligand>
        <name>Zn(2+)</name>
        <dbReference type="ChEBI" id="CHEBI:29105"/>
        <label>1</label>
    </ligand>
</feature>
<feature type="binding site" evidence="4">
    <location>
        <position position="286"/>
    </location>
    <ligand>
        <name>Zn(2+)</name>
        <dbReference type="ChEBI" id="CHEBI:29105"/>
        <label>2</label>
    </ligand>
</feature>
<feature type="binding site" evidence="4">
    <location>
        <position position="289"/>
    </location>
    <ligand>
        <name>Zn(2+)</name>
        <dbReference type="ChEBI" id="CHEBI:29105"/>
        <label>2</label>
    </ligand>
</feature>
<feature type="binding site" evidence="4">
    <location>
        <position position="309"/>
    </location>
    <ligand>
        <name>Zn(2+)</name>
        <dbReference type="ChEBI" id="CHEBI:29105"/>
        <label>2</label>
    </ligand>
</feature>
<feature type="binding site" evidence="4">
    <location>
        <position position="314"/>
    </location>
    <ligand>
        <name>Zn(2+)</name>
        <dbReference type="ChEBI" id="CHEBI:29105"/>
        <label>2</label>
    </ligand>
</feature>
<proteinExistence type="evidence at transcript level"/>
<accession>Q1PRL4</accession>
<accession>Q2QDD9</accession>
<accession>Q3LAF8</accession>
<gene>
    <name type="primary">TRIM71</name>
    <name type="synonym">LIN41</name>
</gene>
<organism>
    <name type="scientific">Gallus gallus</name>
    <name type="common">Chicken</name>
    <dbReference type="NCBI Taxonomy" id="9031"/>
    <lineage>
        <taxon>Eukaryota</taxon>
        <taxon>Metazoa</taxon>
        <taxon>Chordata</taxon>
        <taxon>Craniata</taxon>
        <taxon>Vertebrata</taxon>
        <taxon>Euteleostomi</taxon>
        <taxon>Archelosauria</taxon>
        <taxon>Archosauria</taxon>
        <taxon>Dinosauria</taxon>
        <taxon>Saurischia</taxon>
        <taxon>Theropoda</taxon>
        <taxon>Coelurosauria</taxon>
        <taxon>Aves</taxon>
        <taxon>Neognathae</taxon>
        <taxon>Galloanserae</taxon>
        <taxon>Galliformes</taxon>
        <taxon>Phasianidae</taxon>
        <taxon>Phasianinae</taxon>
        <taxon>Gallus</taxon>
    </lineage>
</organism>
<keyword id="KW-0175">Coiled coil</keyword>
<keyword id="KW-0963">Cytoplasm</keyword>
<keyword id="KW-0217">Developmental protein</keyword>
<keyword id="KW-0479">Metal-binding</keyword>
<keyword id="KW-1185">Reference proteome</keyword>
<keyword id="KW-0677">Repeat</keyword>
<keyword id="KW-0694">RNA-binding</keyword>
<keyword id="KW-0943">RNA-mediated gene silencing</keyword>
<keyword id="KW-0808">Transferase</keyword>
<keyword id="KW-0833">Ubl conjugation pathway</keyword>
<keyword id="KW-0862">Zinc</keyword>
<keyword id="KW-0863">Zinc-finger</keyword>
<protein>
    <recommendedName>
        <fullName>E3 ubiquitin-protein ligase TRIM71</fullName>
        <ecNumber>2.3.2.27</ecNumber>
    </recommendedName>
    <alternativeName>
        <fullName>Protein lin-41 homolog</fullName>
    </alternativeName>
    <alternativeName>
        <fullName evidence="9">RING-type E3 ubiquitin transferase TRIM71</fullName>
    </alternativeName>
    <alternativeName>
        <fullName>Tripartite motif-containing protein 71</fullName>
    </alternativeName>
</protein>
<dbReference type="EC" id="2.3.2.27"/>
<dbReference type="EMBL" id="DQ278876">
    <property type="protein sequence ID" value="ABB88564.1"/>
    <property type="molecule type" value="mRNA"/>
</dbReference>
<dbReference type="EMBL" id="DQ117917">
    <property type="protein sequence ID" value="AAZ57335.1"/>
    <property type="status" value="ALT_INIT"/>
    <property type="molecule type" value="mRNA"/>
</dbReference>
<dbReference type="EMBL" id="AM087669">
    <property type="protein sequence ID" value="CAJ32595.1"/>
    <property type="status" value="ALT_INIT"/>
    <property type="molecule type" value="mRNA"/>
</dbReference>
<dbReference type="RefSeq" id="NP_001032352.2">
    <property type="nucleotide sequence ID" value="NM_001037275.2"/>
</dbReference>
<dbReference type="SMR" id="Q1PRL4"/>
<dbReference type="FunCoup" id="Q1PRL4">
    <property type="interactions" value="194"/>
</dbReference>
<dbReference type="STRING" id="9031.ENSGALP00000030515"/>
<dbReference type="PaxDb" id="9031-ENSGALP00000030515"/>
<dbReference type="KEGG" id="gga:428445"/>
<dbReference type="VEuPathDB" id="HostDB:geneid_428445"/>
<dbReference type="eggNOG" id="KOG2177">
    <property type="taxonomic scope" value="Eukaryota"/>
</dbReference>
<dbReference type="InParanoid" id="Q1PRL4"/>
<dbReference type="OrthoDB" id="342730at2759"/>
<dbReference type="PhylomeDB" id="Q1PRL4"/>
<dbReference type="UniPathway" id="UPA00143"/>
<dbReference type="PRO" id="PR:Q1PRL4"/>
<dbReference type="Proteomes" id="UP000000539">
    <property type="component" value="Unassembled WGS sequence"/>
</dbReference>
<dbReference type="GO" id="GO:0000932">
    <property type="term" value="C:P-body"/>
    <property type="evidence" value="ECO:0000250"/>
    <property type="project" value="UniProtKB"/>
</dbReference>
<dbReference type="GO" id="GO:0035198">
    <property type="term" value="F:miRNA binding"/>
    <property type="evidence" value="ECO:0000250"/>
    <property type="project" value="UniProtKB"/>
</dbReference>
<dbReference type="GO" id="GO:0061630">
    <property type="term" value="F:ubiquitin protein ligase activity"/>
    <property type="evidence" value="ECO:0000318"/>
    <property type="project" value="GO_Central"/>
</dbReference>
<dbReference type="GO" id="GO:0004842">
    <property type="term" value="F:ubiquitin-protein transferase activity"/>
    <property type="evidence" value="ECO:0000250"/>
    <property type="project" value="UniProtKB"/>
</dbReference>
<dbReference type="GO" id="GO:0008270">
    <property type="term" value="F:zinc ion binding"/>
    <property type="evidence" value="ECO:0007669"/>
    <property type="project" value="UniProtKB-KW"/>
</dbReference>
<dbReference type="GO" id="GO:0008543">
    <property type="term" value="P:fibroblast growth factor receptor signaling pathway"/>
    <property type="evidence" value="ECO:0000250"/>
    <property type="project" value="UniProtKB"/>
</dbReference>
<dbReference type="GO" id="GO:0000082">
    <property type="term" value="P:G1/S transition of mitotic cell cycle"/>
    <property type="evidence" value="ECO:0000250"/>
    <property type="project" value="UniProtKB"/>
</dbReference>
<dbReference type="GO" id="GO:0035278">
    <property type="term" value="P:miRNA-mediated gene silencing by inhibition of translation"/>
    <property type="evidence" value="ECO:0000250"/>
    <property type="project" value="UniProtKB"/>
</dbReference>
<dbReference type="GO" id="GO:0021915">
    <property type="term" value="P:neural tube development"/>
    <property type="evidence" value="ECO:0000250"/>
    <property type="project" value="UniProtKB"/>
</dbReference>
<dbReference type="GO" id="GO:0043161">
    <property type="term" value="P:proteasome-mediated ubiquitin-dependent protein catabolic process"/>
    <property type="evidence" value="ECO:0000318"/>
    <property type="project" value="GO_Central"/>
</dbReference>
<dbReference type="GO" id="GO:0051865">
    <property type="term" value="P:protein autoubiquitination"/>
    <property type="evidence" value="ECO:0000250"/>
    <property type="project" value="UniProtKB"/>
</dbReference>
<dbReference type="GO" id="GO:0000209">
    <property type="term" value="P:protein polyubiquitination"/>
    <property type="evidence" value="ECO:0000318"/>
    <property type="project" value="GO_Central"/>
</dbReference>
<dbReference type="GO" id="GO:2000177">
    <property type="term" value="P:regulation of neural precursor cell proliferation"/>
    <property type="evidence" value="ECO:0000250"/>
    <property type="project" value="UniProtKB"/>
</dbReference>
<dbReference type="GO" id="GO:0072089">
    <property type="term" value="P:stem cell proliferation"/>
    <property type="evidence" value="ECO:0000250"/>
    <property type="project" value="UniProtKB"/>
</dbReference>
<dbReference type="CDD" id="cd19812">
    <property type="entry name" value="Bbox1_TRIM71_C-VII"/>
    <property type="match status" value="1"/>
</dbReference>
<dbReference type="CDD" id="cd19796">
    <property type="entry name" value="Bbox2_TRIM71_C-VII"/>
    <property type="match status" value="1"/>
</dbReference>
<dbReference type="CDD" id="cd14954">
    <property type="entry name" value="NHL_TRIM71_like"/>
    <property type="match status" value="1"/>
</dbReference>
<dbReference type="CDD" id="cd16589">
    <property type="entry name" value="RING-HC_TRIM71_C-VII"/>
    <property type="match status" value="1"/>
</dbReference>
<dbReference type="FunFam" id="2.120.10.30:FF:000013">
    <property type="entry name" value="E3 ubiquitin-protein ligase TRIM71"/>
    <property type="match status" value="1"/>
</dbReference>
<dbReference type="FunFam" id="2.120.10.30:FF:000025">
    <property type="entry name" value="E3 ubiquitin-protein ligase TRIM71"/>
    <property type="match status" value="1"/>
</dbReference>
<dbReference type="FunFam" id="2.120.10.30:FF:000080">
    <property type="entry name" value="E3 ubiquitin-protein ligase TRIM71"/>
    <property type="match status" value="1"/>
</dbReference>
<dbReference type="FunFam" id="2.60.40.10:FF:000527">
    <property type="entry name" value="E3 ubiquitin-protein ligase TRIM71"/>
    <property type="match status" value="1"/>
</dbReference>
<dbReference type="FunFam" id="3.30.160.60:FF:000923">
    <property type="entry name" value="E3 ubiquitin-protein ligase TRIM71"/>
    <property type="match status" value="1"/>
</dbReference>
<dbReference type="FunFam" id="3.30.40.10:FF:000435">
    <property type="entry name" value="Tripartite motif containing 71, E3 ubiquitin protein ligase"/>
    <property type="match status" value="1"/>
</dbReference>
<dbReference type="Gene3D" id="4.10.830.40">
    <property type="match status" value="1"/>
</dbReference>
<dbReference type="Gene3D" id="3.30.160.60">
    <property type="entry name" value="Classic Zinc Finger"/>
    <property type="match status" value="1"/>
</dbReference>
<dbReference type="Gene3D" id="2.60.40.10">
    <property type="entry name" value="Immunoglobulins"/>
    <property type="match status" value="1"/>
</dbReference>
<dbReference type="Gene3D" id="2.120.10.30">
    <property type="entry name" value="TolB, C-terminal domain"/>
    <property type="match status" value="2"/>
</dbReference>
<dbReference type="Gene3D" id="3.30.40.10">
    <property type="entry name" value="Zinc/RING finger domain, C3HC4 (zinc finger)"/>
    <property type="match status" value="1"/>
</dbReference>
<dbReference type="InterPro" id="IPR011042">
    <property type="entry name" value="6-blade_b-propeller_TolB-like"/>
</dbReference>
<dbReference type="InterPro" id="IPR017868">
    <property type="entry name" value="Filamin/ABP280_repeat-like"/>
</dbReference>
<dbReference type="InterPro" id="IPR001298">
    <property type="entry name" value="Filamin/ABP280_rpt"/>
</dbReference>
<dbReference type="InterPro" id="IPR013783">
    <property type="entry name" value="Ig-like_fold"/>
</dbReference>
<dbReference type="InterPro" id="IPR014756">
    <property type="entry name" value="Ig_E-set"/>
</dbReference>
<dbReference type="InterPro" id="IPR001258">
    <property type="entry name" value="NHL_repeat"/>
</dbReference>
<dbReference type="InterPro" id="IPR050952">
    <property type="entry name" value="TRIM-NHL_E3_ligases"/>
</dbReference>
<dbReference type="InterPro" id="IPR000315">
    <property type="entry name" value="Znf_B-box"/>
</dbReference>
<dbReference type="InterPro" id="IPR001841">
    <property type="entry name" value="Znf_RING"/>
</dbReference>
<dbReference type="InterPro" id="IPR013083">
    <property type="entry name" value="Znf_RING/FYVE/PHD"/>
</dbReference>
<dbReference type="InterPro" id="IPR017907">
    <property type="entry name" value="Znf_RING_CS"/>
</dbReference>
<dbReference type="PANTHER" id="PTHR24104">
    <property type="entry name" value="E3 UBIQUITIN-PROTEIN LIGASE NHLRC1-RELATED"/>
    <property type="match status" value="1"/>
</dbReference>
<dbReference type="PANTHER" id="PTHR24104:SF25">
    <property type="entry name" value="PROTEIN LIN-41"/>
    <property type="match status" value="1"/>
</dbReference>
<dbReference type="Pfam" id="PF00630">
    <property type="entry name" value="Filamin"/>
    <property type="match status" value="1"/>
</dbReference>
<dbReference type="Pfam" id="PF01436">
    <property type="entry name" value="NHL"/>
    <property type="match status" value="6"/>
</dbReference>
<dbReference type="Pfam" id="PF00643">
    <property type="entry name" value="zf-B_box"/>
    <property type="match status" value="1"/>
</dbReference>
<dbReference type="SMART" id="SM00336">
    <property type="entry name" value="BBOX"/>
    <property type="match status" value="2"/>
</dbReference>
<dbReference type="SMART" id="SM00557">
    <property type="entry name" value="IG_FLMN"/>
    <property type="match status" value="1"/>
</dbReference>
<dbReference type="SMART" id="SM00184">
    <property type="entry name" value="RING"/>
    <property type="match status" value="1"/>
</dbReference>
<dbReference type="SUPFAM" id="SSF57845">
    <property type="entry name" value="B-box zinc-binding domain"/>
    <property type="match status" value="1"/>
</dbReference>
<dbReference type="SUPFAM" id="SSF81296">
    <property type="entry name" value="E set domains"/>
    <property type="match status" value="1"/>
</dbReference>
<dbReference type="SUPFAM" id="SSF101898">
    <property type="entry name" value="NHL repeat"/>
    <property type="match status" value="1"/>
</dbReference>
<dbReference type="SUPFAM" id="SSF57850">
    <property type="entry name" value="RING/U-box"/>
    <property type="match status" value="1"/>
</dbReference>
<dbReference type="PROSITE" id="PS50194">
    <property type="entry name" value="FILAMIN_REPEAT"/>
    <property type="match status" value="1"/>
</dbReference>
<dbReference type="PROSITE" id="PS51125">
    <property type="entry name" value="NHL"/>
    <property type="match status" value="6"/>
</dbReference>
<dbReference type="PROSITE" id="PS50119">
    <property type="entry name" value="ZF_BBOX"/>
    <property type="match status" value="2"/>
</dbReference>
<dbReference type="PROSITE" id="PS00518">
    <property type="entry name" value="ZF_RING_1"/>
    <property type="match status" value="1"/>
</dbReference>
<dbReference type="PROSITE" id="PS50089">
    <property type="entry name" value="ZF_RING_2"/>
    <property type="match status" value="1"/>
</dbReference>
<name>LIN41_CHICK</name>